<comment type="function">
    <text evidence="2">Endonuclease that cooperates with the MRE11-RAD50-NBN (MRN) complex in DNA-end resection, the first step of double-strand break (DSB) repair through the homologous recombination (HR) pathway. Functions downstream of the MRN complex and ATM, promotes ATR activation and its recruitment to DSBs in the S/G2 phase facilitating the generation of ssDNA. Specifically promotes the endonuclease activity of the MRN complex to clear DNA ends containing protein adducts: recruited to DSBs by nbn following phosphorylation, and promotes the endonuclease of mre11 to clear protein-DNA adducts and generate clean double-strand break ends.</text>
</comment>
<comment type="subunit">
    <text evidence="1 2">Homotetramer; formed by antiparallel association of helical extensions protruding from the N-termini of two parallel coiled-coil dimers (By similarity). Interacts with the MRN complex; the interaction links DNA sensing to resection (By similarity). Interacts with samhd1 (By similarity).</text>
</comment>
<comment type="subcellular location">
    <subcellularLocation>
        <location evidence="2">Nucleus</location>
    </subcellularLocation>
    <subcellularLocation>
        <location evidence="2">Chromosome</location>
    </subcellularLocation>
    <text evidence="2">Associates with sites of DNA damage in S/G2 phase. Recruited to DSBs by the MRE11-RAD50-NBN (MRN) complex following phosphorylation.</text>
</comment>
<comment type="PTM">
    <text evidence="2">Phosphorylation at Thr-599 and Thr-611 promote interaction with nbn and recruitment to double-strand breaks (DSBs).</text>
</comment>
<comment type="miscellaneous">
    <text evidence="2">Binds one Zn(2+) atom per dimer. Zn(2+)-binding is not required for homotetramerization.</text>
</comment>
<comment type="similarity">
    <text evidence="4">Belongs to the COM1/SAE2/CtIP family.</text>
</comment>
<name>CTIP_DANRE</name>
<gene>
    <name type="primary">rbbp8</name>
    <name type="ORF">zgc:113143</name>
</gene>
<protein>
    <recommendedName>
        <fullName>DNA endonuclease RBBP8</fullName>
        <ecNumber evidence="2">3.1.-.-</ecNumber>
    </recommendedName>
</protein>
<evidence type="ECO:0000250" key="1">
    <source>
        <dbReference type="UniProtKB" id="Q6GNV6"/>
    </source>
</evidence>
<evidence type="ECO:0000250" key="2">
    <source>
        <dbReference type="UniProtKB" id="Q99708"/>
    </source>
</evidence>
<evidence type="ECO:0000256" key="3">
    <source>
        <dbReference type="SAM" id="MobiDB-lite"/>
    </source>
</evidence>
<evidence type="ECO:0000305" key="4"/>
<feature type="chain" id="PRO_0000417038" description="DNA endonuclease RBBP8">
    <location>
        <begin position="1"/>
        <end position="651"/>
    </location>
</feature>
<feature type="region of interest" description="Disordered" evidence="3">
    <location>
        <begin position="138"/>
        <end position="199"/>
    </location>
</feature>
<feature type="region of interest" description="Disordered" evidence="3">
    <location>
        <begin position="363"/>
        <end position="433"/>
    </location>
</feature>
<feature type="region of interest" description="Disordered" evidence="3">
    <location>
        <begin position="487"/>
        <end position="539"/>
    </location>
</feature>
<feature type="coiled-coil region" evidence="2">
    <location>
        <begin position="35"/>
        <end position="84"/>
    </location>
</feature>
<feature type="coiled-coil region" evidence="2">
    <location>
        <begin position="117"/>
        <end position="138"/>
    </location>
</feature>
<feature type="compositionally biased region" description="Polar residues" evidence="3">
    <location>
        <begin position="363"/>
        <end position="379"/>
    </location>
</feature>
<feature type="compositionally biased region" description="Basic and acidic residues" evidence="3">
    <location>
        <begin position="380"/>
        <end position="391"/>
    </location>
</feature>
<feature type="compositionally biased region" description="Acidic residues" evidence="3">
    <location>
        <begin position="503"/>
        <end position="515"/>
    </location>
</feature>
<feature type="compositionally biased region" description="Basic and acidic residues" evidence="3">
    <location>
        <begin position="525"/>
        <end position="539"/>
    </location>
</feature>
<feature type="modified residue" description="Phosphothreonine" evidence="2">
    <location>
        <position position="599"/>
    </location>
</feature>
<feature type="modified residue" description="Phosphothreonine" evidence="2">
    <location>
        <position position="611"/>
    </location>
</feature>
<feature type="sequence conflict" description="In Ref. 2; AAH90186." evidence="4" ref="2">
    <original>R</original>
    <variation>C</variation>
    <location>
        <position position="91"/>
    </location>
</feature>
<feature type="sequence conflict" description="In Ref. 2; AAH90186." evidence="4" ref="2">
    <original>A</original>
    <variation>T</variation>
    <location>
        <position position="224"/>
    </location>
</feature>
<feature type="sequence conflict" description="In Ref. 2; AAH90186." evidence="4" ref="2">
    <original>V</original>
    <variation>F</variation>
    <location>
        <position position="253"/>
    </location>
</feature>
<feature type="sequence conflict" description="In Ref. 2; AAH90186." evidence="4" ref="2">
    <original>E</original>
    <variation>V</variation>
    <location>
        <position position="514"/>
    </location>
</feature>
<feature type="sequence conflict" description="In Ref. 2; AAH90186." evidence="4" ref="2">
    <original>E</original>
    <variation>V</variation>
    <location>
        <position position="578"/>
    </location>
</feature>
<accession>F1R983</accession>
<accession>Q5EAZ7</accession>
<reference key="1">
    <citation type="journal article" date="2013" name="Nature">
        <title>The zebrafish reference genome sequence and its relationship to the human genome.</title>
        <authorList>
            <person name="Howe K."/>
            <person name="Clark M.D."/>
            <person name="Torroja C.F."/>
            <person name="Torrance J."/>
            <person name="Berthelot C."/>
            <person name="Muffato M."/>
            <person name="Collins J.E."/>
            <person name="Humphray S."/>
            <person name="McLaren K."/>
            <person name="Matthews L."/>
            <person name="McLaren S."/>
            <person name="Sealy I."/>
            <person name="Caccamo M."/>
            <person name="Churcher C."/>
            <person name="Scott C."/>
            <person name="Barrett J.C."/>
            <person name="Koch R."/>
            <person name="Rauch G.J."/>
            <person name="White S."/>
            <person name="Chow W."/>
            <person name="Kilian B."/>
            <person name="Quintais L.T."/>
            <person name="Guerra-Assuncao J.A."/>
            <person name="Zhou Y."/>
            <person name="Gu Y."/>
            <person name="Yen J."/>
            <person name="Vogel J.H."/>
            <person name="Eyre T."/>
            <person name="Redmond S."/>
            <person name="Banerjee R."/>
            <person name="Chi J."/>
            <person name="Fu B."/>
            <person name="Langley E."/>
            <person name="Maguire S.F."/>
            <person name="Laird G.K."/>
            <person name="Lloyd D."/>
            <person name="Kenyon E."/>
            <person name="Donaldson S."/>
            <person name="Sehra H."/>
            <person name="Almeida-King J."/>
            <person name="Loveland J."/>
            <person name="Trevanion S."/>
            <person name="Jones M."/>
            <person name="Quail M."/>
            <person name="Willey D."/>
            <person name="Hunt A."/>
            <person name="Burton J."/>
            <person name="Sims S."/>
            <person name="McLay K."/>
            <person name="Plumb B."/>
            <person name="Davis J."/>
            <person name="Clee C."/>
            <person name="Oliver K."/>
            <person name="Clark R."/>
            <person name="Riddle C."/>
            <person name="Elliot D."/>
            <person name="Threadgold G."/>
            <person name="Harden G."/>
            <person name="Ware D."/>
            <person name="Begum S."/>
            <person name="Mortimore B."/>
            <person name="Kerry G."/>
            <person name="Heath P."/>
            <person name="Phillimore B."/>
            <person name="Tracey A."/>
            <person name="Corby N."/>
            <person name="Dunn M."/>
            <person name="Johnson C."/>
            <person name="Wood J."/>
            <person name="Clark S."/>
            <person name="Pelan S."/>
            <person name="Griffiths G."/>
            <person name="Smith M."/>
            <person name="Glithero R."/>
            <person name="Howden P."/>
            <person name="Barker N."/>
            <person name="Lloyd C."/>
            <person name="Stevens C."/>
            <person name="Harley J."/>
            <person name="Holt K."/>
            <person name="Panagiotidis G."/>
            <person name="Lovell J."/>
            <person name="Beasley H."/>
            <person name="Henderson C."/>
            <person name="Gordon D."/>
            <person name="Auger K."/>
            <person name="Wright D."/>
            <person name="Collins J."/>
            <person name="Raisen C."/>
            <person name="Dyer L."/>
            <person name="Leung K."/>
            <person name="Robertson L."/>
            <person name="Ambridge K."/>
            <person name="Leongamornlert D."/>
            <person name="McGuire S."/>
            <person name="Gilderthorp R."/>
            <person name="Griffiths C."/>
            <person name="Manthravadi D."/>
            <person name="Nichol S."/>
            <person name="Barker G."/>
            <person name="Whitehead S."/>
            <person name="Kay M."/>
            <person name="Brown J."/>
            <person name="Murnane C."/>
            <person name="Gray E."/>
            <person name="Humphries M."/>
            <person name="Sycamore N."/>
            <person name="Barker D."/>
            <person name="Saunders D."/>
            <person name="Wallis J."/>
            <person name="Babbage A."/>
            <person name="Hammond S."/>
            <person name="Mashreghi-Mohammadi M."/>
            <person name="Barr L."/>
            <person name="Martin S."/>
            <person name="Wray P."/>
            <person name="Ellington A."/>
            <person name="Matthews N."/>
            <person name="Ellwood M."/>
            <person name="Woodmansey R."/>
            <person name="Clark G."/>
            <person name="Cooper J."/>
            <person name="Tromans A."/>
            <person name="Grafham D."/>
            <person name="Skuce C."/>
            <person name="Pandian R."/>
            <person name="Andrews R."/>
            <person name="Harrison E."/>
            <person name="Kimberley A."/>
            <person name="Garnett J."/>
            <person name="Fosker N."/>
            <person name="Hall R."/>
            <person name="Garner P."/>
            <person name="Kelly D."/>
            <person name="Bird C."/>
            <person name="Palmer S."/>
            <person name="Gehring I."/>
            <person name="Berger A."/>
            <person name="Dooley C.M."/>
            <person name="Ersan-Urun Z."/>
            <person name="Eser C."/>
            <person name="Geiger H."/>
            <person name="Geisler M."/>
            <person name="Karotki L."/>
            <person name="Kirn A."/>
            <person name="Konantz J."/>
            <person name="Konantz M."/>
            <person name="Oberlander M."/>
            <person name="Rudolph-Geiger S."/>
            <person name="Teucke M."/>
            <person name="Lanz C."/>
            <person name="Raddatz G."/>
            <person name="Osoegawa K."/>
            <person name="Zhu B."/>
            <person name="Rapp A."/>
            <person name="Widaa S."/>
            <person name="Langford C."/>
            <person name="Yang F."/>
            <person name="Schuster S.C."/>
            <person name="Carter N.P."/>
            <person name="Harrow J."/>
            <person name="Ning Z."/>
            <person name="Herrero J."/>
            <person name="Searle S.M."/>
            <person name="Enright A."/>
            <person name="Geisler R."/>
            <person name="Plasterk R.H."/>
            <person name="Lee C."/>
            <person name="Westerfield M."/>
            <person name="de Jong P.J."/>
            <person name="Zon L.I."/>
            <person name="Postlethwait J.H."/>
            <person name="Nusslein-Volhard C."/>
            <person name="Hubbard T.J."/>
            <person name="Roest Crollius H."/>
            <person name="Rogers J."/>
            <person name="Stemple D.L."/>
        </authorList>
    </citation>
    <scope>NUCLEOTIDE SEQUENCE [LARGE SCALE GENOMIC DNA]</scope>
    <source>
        <strain>Tuebingen</strain>
    </source>
</reference>
<reference key="2">
    <citation type="submission" date="2005-02" db="EMBL/GenBank/DDBJ databases">
        <authorList>
            <consortium name="NIH - Zebrafish Gene Collection (ZGC) project"/>
        </authorList>
    </citation>
    <scope>NUCLEOTIDE SEQUENCE [LARGE SCALE MRNA]</scope>
    <source>
        <tissue>Embryo</tissue>
    </source>
</reference>
<proteinExistence type="evidence at transcript level"/>
<sequence length="651" mass="74390">MSITPADLSPASSSDHREKLQELLTAVRDLHDTALQELQAKIAKLKKERCLDAQKLSEFHSKNQHLREQQKIQQEKIRQLEDRLRSGPCDRCTVKEKQIKKTNTELEDNNQRNLSVISELEAERKTLTDENRRLSLELERLRRSGSPQNTSSEAEEGMIPDSPLRPLSLPVASKMKRRKEQNHVRYTETPLSLSHPESRQREQSVAFGCNGKGVLVAETCEMDATSVAERDNKRHFRIVVPETCRPDVYPEQVDDVDDDDLHIPSHTEQNQKPELRDCTNILIAGQNDDSPLILRCRPLASQDHQSSIDDVLRTPANSSTCVLTKGKRKHSNGAKKDREISDCRLDADETDIKGIIFASTPANGRLQSKNQETSEIETTQDSKKKCLDGHTPRKSLVQNHHAPFPYDQSWSVDPGADLGQYDTESSPQPEHQARTDLETLDTDCTFVSHSLLLRGQKTTGQSQTTGIGQKANDSLADIFDKTGYGEYESCPQDDSIDLKQDSVYEEEREEDDPEEKPEAAVVFRRPADRKPLVSDSDKSSRNKSFACVEVVRKKDERRKLKGHYCKECEVYYADLPEEEREKKLTSCSRHRYRYIPPSTPENFWEVGFPSTQTCVERGYIKEDEQPDVRIRRRRPYLAMFSPKAKSQKKKH</sequence>
<dbReference type="EC" id="3.1.-.-" evidence="2"/>
<dbReference type="EMBL" id="CU634022">
    <property type="status" value="NOT_ANNOTATED_CDS"/>
    <property type="molecule type" value="Genomic_DNA"/>
</dbReference>
<dbReference type="EMBL" id="FP089511">
    <property type="status" value="NOT_ANNOTATED_CDS"/>
    <property type="molecule type" value="Genomic_DNA"/>
</dbReference>
<dbReference type="EMBL" id="BC090186">
    <property type="protein sequence ID" value="AAH90186.1"/>
    <property type="molecule type" value="mRNA"/>
</dbReference>
<dbReference type="RefSeq" id="NP_001012518.1">
    <property type="nucleotide sequence ID" value="NM_001012500.1"/>
</dbReference>
<dbReference type="RefSeq" id="XP_005174246.1">
    <property type="nucleotide sequence ID" value="XM_005174189.5"/>
</dbReference>
<dbReference type="SMR" id="F1R983"/>
<dbReference type="FunCoup" id="F1R983">
    <property type="interactions" value="1111"/>
</dbReference>
<dbReference type="STRING" id="7955.ENSDARP00000063831"/>
<dbReference type="PaxDb" id="7955-ENSDARP00000063831"/>
<dbReference type="Ensembl" id="ENSDART00000063832">
    <property type="protein sequence ID" value="ENSDARP00000063831"/>
    <property type="gene ID" value="ENSDARG00000043480"/>
</dbReference>
<dbReference type="GeneID" id="503536"/>
<dbReference type="KEGG" id="dre:503536"/>
<dbReference type="AGR" id="ZFIN:ZDB-GENE-050220-14"/>
<dbReference type="CTD" id="5932"/>
<dbReference type="ZFIN" id="ZDB-GENE-050220-14">
    <property type="gene designation" value="rbbp8"/>
</dbReference>
<dbReference type="eggNOG" id="ENOG502QTV5">
    <property type="taxonomic scope" value="Eukaryota"/>
</dbReference>
<dbReference type="HOGENOM" id="CLU_019262_0_0_1"/>
<dbReference type="InParanoid" id="F1R983"/>
<dbReference type="OMA" id="NTCEMDA"/>
<dbReference type="OrthoDB" id="5801062at2759"/>
<dbReference type="TreeFam" id="TF106469"/>
<dbReference type="Reactome" id="R-DRE-5693607">
    <property type="pathway name" value="Processing of DNA double-strand break ends"/>
</dbReference>
<dbReference type="PRO" id="PR:F1R983"/>
<dbReference type="Proteomes" id="UP000000437">
    <property type="component" value="Chromosome 24"/>
</dbReference>
<dbReference type="Bgee" id="ENSDARG00000043480">
    <property type="expression patterns" value="Expressed in mature ovarian follicle and 26 other cell types or tissues"/>
</dbReference>
<dbReference type="ExpressionAtlas" id="F1R983">
    <property type="expression patterns" value="baseline and differential"/>
</dbReference>
<dbReference type="GO" id="GO:0005694">
    <property type="term" value="C:chromosome"/>
    <property type="evidence" value="ECO:0007669"/>
    <property type="project" value="UniProtKB-SubCell"/>
</dbReference>
<dbReference type="GO" id="GO:0005634">
    <property type="term" value="C:nucleus"/>
    <property type="evidence" value="ECO:0007669"/>
    <property type="project" value="UniProtKB-SubCell"/>
</dbReference>
<dbReference type="GO" id="GO:0003684">
    <property type="term" value="F:damaged DNA binding"/>
    <property type="evidence" value="ECO:0000318"/>
    <property type="project" value="GO_Central"/>
</dbReference>
<dbReference type="GO" id="GO:0004519">
    <property type="term" value="F:endonuclease activity"/>
    <property type="evidence" value="ECO:0007669"/>
    <property type="project" value="UniProtKB-KW"/>
</dbReference>
<dbReference type="GO" id="GO:0051301">
    <property type="term" value="P:cell division"/>
    <property type="evidence" value="ECO:0007669"/>
    <property type="project" value="UniProtKB-KW"/>
</dbReference>
<dbReference type="GO" id="GO:0010792">
    <property type="term" value="P:DNA double-strand break processing involved in repair via single-strand annealing"/>
    <property type="evidence" value="ECO:0000318"/>
    <property type="project" value="GO_Central"/>
</dbReference>
<dbReference type="GO" id="GO:0051321">
    <property type="term" value="P:meiotic cell cycle"/>
    <property type="evidence" value="ECO:0007669"/>
    <property type="project" value="UniProtKB-KW"/>
</dbReference>
<dbReference type="InterPro" id="IPR019518">
    <property type="entry name" value="CtIP_N"/>
</dbReference>
<dbReference type="InterPro" id="IPR013882">
    <property type="entry name" value="Ctp1_C"/>
</dbReference>
<dbReference type="InterPro" id="IPR033316">
    <property type="entry name" value="RBBP8-like"/>
</dbReference>
<dbReference type="PANTHER" id="PTHR15107:SF4">
    <property type="entry name" value="DNA ENDONUCLEASE RBBP8"/>
    <property type="match status" value="1"/>
</dbReference>
<dbReference type="PANTHER" id="PTHR15107">
    <property type="entry name" value="RETINOBLASTOMA BINDING PROTEIN 8"/>
    <property type="match status" value="1"/>
</dbReference>
<dbReference type="Pfam" id="PF10482">
    <property type="entry name" value="CtIP_N"/>
    <property type="match status" value="1"/>
</dbReference>
<dbReference type="Pfam" id="PF08573">
    <property type="entry name" value="SAE2"/>
    <property type="match status" value="1"/>
</dbReference>
<organism>
    <name type="scientific">Danio rerio</name>
    <name type="common">Zebrafish</name>
    <name type="synonym">Brachydanio rerio</name>
    <dbReference type="NCBI Taxonomy" id="7955"/>
    <lineage>
        <taxon>Eukaryota</taxon>
        <taxon>Metazoa</taxon>
        <taxon>Chordata</taxon>
        <taxon>Craniata</taxon>
        <taxon>Vertebrata</taxon>
        <taxon>Euteleostomi</taxon>
        <taxon>Actinopterygii</taxon>
        <taxon>Neopterygii</taxon>
        <taxon>Teleostei</taxon>
        <taxon>Ostariophysi</taxon>
        <taxon>Cypriniformes</taxon>
        <taxon>Danionidae</taxon>
        <taxon>Danioninae</taxon>
        <taxon>Danio</taxon>
    </lineage>
</organism>
<keyword id="KW-0131">Cell cycle</keyword>
<keyword id="KW-0132">Cell division</keyword>
<keyword id="KW-0158">Chromosome</keyword>
<keyword id="KW-0175">Coiled coil</keyword>
<keyword id="KW-0227">DNA damage</keyword>
<keyword id="KW-0234">DNA repair</keyword>
<keyword id="KW-0238">DNA-binding</keyword>
<keyword id="KW-0255">Endonuclease</keyword>
<keyword id="KW-0378">Hydrolase</keyword>
<keyword id="KW-0469">Meiosis</keyword>
<keyword id="KW-0498">Mitosis</keyword>
<keyword id="KW-0540">Nuclease</keyword>
<keyword id="KW-0539">Nucleus</keyword>
<keyword id="KW-0597">Phosphoprotein</keyword>
<keyword id="KW-1185">Reference proteome</keyword>
<keyword id="KW-0862">Zinc</keyword>